<reference key="1">
    <citation type="journal article" date="1998" name="Infect. Immun.">
        <title>Molecular analysis of Shiga toxigenic Escherichia coli O111:H-proteins which react with sera from patients with hemolytic-uremic syndrome.</title>
        <authorList>
            <person name="Voss E."/>
            <person name="Paton A.W."/>
            <person name="Manning P.A."/>
            <person name="Paton J.C."/>
        </authorList>
    </citation>
    <scope>NUCLEOTIDE SEQUENCE [GENOMIC DNA]</scope>
</reference>
<proteinExistence type="inferred from homology"/>
<gene>
    <name type="primary">eae</name>
    <name type="synonym">eaeA</name>
</gene>
<keyword id="KW-0130">Cell adhesion</keyword>
<keyword id="KW-0998">Cell outer membrane</keyword>
<keyword id="KW-1015">Disulfide bond</keyword>
<keyword id="KW-0472">Membrane</keyword>
<keyword id="KW-0677">Repeat</keyword>
<keyword id="KW-0732">Signal</keyword>
<keyword id="KW-0843">Virulence</keyword>
<protein>
    <recommendedName>
        <fullName>Intimin</fullName>
    </recommendedName>
    <alternativeName>
        <fullName>Attaching and effacing protein</fullName>
        <shortName>Eae protein</shortName>
    </alternativeName>
</protein>
<sequence>MITHGFYARTRHKHKLKKTFIMLSAGLGLFFYVNQNSFANGENYFKLSSDSKLLTQNVAQDRLFYTLKTGETVSSISKSQGISLSVIWSLNKHLYSSESEMLKAAPGQQIILPLKKLSVEYGALPVLGSAPVVAAGGVAGHTNKMTKMSPDATQSNMTDDRALNYTAQQAASLGSQLQSRSLHGDYAKDTALGIAGNQASSQLQAWLQHYGTAEVNLQSGNNFDGSSLDFLLPFYDSEKMLAFGQVGARYIDSRFTANLGAGQRFFLPENMLGYNVFIDQDFSGDNTRLGIGGEYWRDYFKSSVNGYFRMSGWHESYNKKDYDERPANGFDIRFNGYLPSYPALGAKLMYEQYYGDNVALFNSDKLQSNPGAATVGVNYTPIPLVTMGIDYRHGTGYENDLLYSMQFRYQFDKPWSPQIEPQYVNELRTLSGSRYDLVQRNNNIILEYKKQDILSLNIPHDINGTEHSTQKIQLIVKSKYGLDRIVWDDSALRSQGGQIQHSGSQSAQDYQAILPAYVQGGSNIYKVTARAYDRNGNSSNNVQLTITVLSNGQVVDQVGVTDFTADKTSAKADGTEAITYTATVKKNGVTQANVPVSFNIVSGTATLGANSATTDANGKATVTLKSSTPGQVVVSAKTAEMTSALNASAVIFVEQTKASITEIKADKTTAVANGNDAVTYTVKVMKEGQPVHGHSVAFTTNFGMFNGKSQTQNATTGSDGRATITLTSSSAGKATVSATVSGGNDVKAPEVTFFDGLKIDNKVDILGKNVTGDLPNIWLQYGQFKLKVSGGNGTYSWHSENTNIATVDESGKVTLKGKGTAVINVTSGDKQTVSYTIKAPNYMIRVGNKASYANAMSFCGNLLPSSQTVLSNVYNSWGPANGYDHYRSMQSITAWITQTEADKISGVSTTYDLITQNPHKDVSLNAPNVYAVCVE</sequence>
<feature type="signal peptide" evidence="3">
    <location>
        <begin position="1"/>
        <end position="41"/>
    </location>
</feature>
<feature type="chain" id="PRO_0000211826" description="Intimin" evidence="3">
    <location>
        <begin position="42"/>
        <end position="935"/>
    </location>
</feature>
<feature type="domain" description="LysM" evidence="5">
    <location>
        <begin position="63"/>
        <end position="112"/>
    </location>
</feature>
<feature type="domain" description="Big-1 1" evidence="4">
    <location>
        <begin position="560"/>
        <end position="653"/>
    </location>
</feature>
<feature type="domain" description="Big-1 2" evidence="4">
    <location>
        <begin position="660"/>
        <end position="754"/>
    </location>
</feature>
<feature type="domain" description="BIG2" evidence="3">
    <location>
        <begin position="790"/>
        <end position="834"/>
    </location>
</feature>
<feature type="region of interest" description="Required for periplasmic localization" evidence="1">
    <location>
        <begin position="40"/>
        <end position="212"/>
    </location>
</feature>
<feature type="region of interest" description="Peptidoglycan-binding" evidence="1">
    <location>
        <begin position="40"/>
        <end position="153"/>
    </location>
</feature>
<feature type="region of interest" description="Sufficient for homodimerization" evidence="1">
    <location>
        <begin position="40"/>
        <end position="153"/>
    </location>
</feature>
<feature type="region of interest" description="Inverse autotransporter" evidence="2">
    <location>
        <begin position="210"/>
        <end position="411"/>
    </location>
</feature>
<feature type="region of interest" description="Signature sequence for beta-barrel assembly machinery (BAM), which recognizes the unfolded beta-barrel in the periplasm" evidence="2">
    <location>
        <begin position="402"/>
        <end position="411"/>
    </location>
</feature>
<feature type="site" description="Implicated in intimin receptor Tir-binding" evidence="1">
    <location>
        <position position="892"/>
    </location>
</feature>
<feature type="site" description="Implicated in intimin receptor Tir-binding" evidence="1">
    <location>
        <position position="895"/>
    </location>
</feature>
<feature type="site" description="Implicated in intimin receptor Tir-binding" evidence="1">
    <location>
        <position position="899"/>
    </location>
</feature>
<feature type="site" description="Implicated in intimin receptor Tir-binding" evidence="1">
    <location>
        <position position="902"/>
    </location>
</feature>
<feature type="site" description="Implicated in intimin receptor Tir-binding" evidence="1">
    <location>
        <position position="907"/>
    </location>
</feature>
<feature type="site" description="Implicated in intimin receptor Tir-binding" evidence="1">
    <location>
        <position position="910"/>
    </location>
</feature>
<feature type="site" description="Implicated in intimin receptor Tir-binding" evidence="1">
    <location>
        <position position="916"/>
    </location>
</feature>
<feature type="site" description="Implicated in intimin receptor Tir-binding" evidence="1">
    <location>
        <position position="928"/>
    </location>
</feature>
<feature type="site" description="Implicated in intimin receptor Tir-binding" evidence="1">
    <location>
        <position position="930"/>
    </location>
</feature>
<feature type="site" description="Implicated in intimin receptor Tir-binding" evidence="1">
    <location>
        <position position="934"/>
    </location>
</feature>
<feature type="disulfide bond" evidence="2">
    <location>
        <begin position="859"/>
        <end position="933"/>
    </location>
</feature>
<evidence type="ECO:0000250" key="1">
    <source>
        <dbReference type="UniProtKB" id="P19809"/>
    </source>
</evidence>
<evidence type="ECO:0000250" key="2">
    <source>
        <dbReference type="UniProtKB" id="P43261"/>
    </source>
</evidence>
<evidence type="ECO:0000255" key="3"/>
<evidence type="ECO:0000255" key="4">
    <source>
        <dbReference type="PROSITE-ProRule" id="PRU00445"/>
    </source>
</evidence>
<evidence type="ECO:0000255" key="5">
    <source>
        <dbReference type="PROSITE-ProRule" id="PRU01118"/>
    </source>
</evidence>
<evidence type="ECO:0000305" key="6"/>
<comment type="function">
    <text evidence="1 6">An inverse autotransporter. Adhesin, which mediates attachment to the human intestine epithelial cells. Necessary for the production of attaching and effacing lesions on infected human tissue culture cells. Anchored to the outer membrane by binding to peptidoglycan (PGN) via its periplasmic domain, thus helping in receptor interactions during host invasion (Probable). PGN-binding may also aid in resisting mechanical and chemical stress during transit of the bacterium through the gastrointestinal tract of the host (Probable).</text>
</comment>
<comment type="subunit">
    <text evidence="1">Homodimer (By similarity). Interacts with Tir (By similarity).</text>
</comment>
<comment type="subcellular location">
    <subcellularLocation>
        <location evidence="2">Cell outer membrane</location>
    </subcellularLocation>
    <text evidence="2">The passenger domain is exposed on the bacterial cell surface.</text>
</comment>
<comment type="domain">
    <text evidence="2">Has a signal sequence, a periplasmic Lys M domain, an inverse autotransporter domain (residues 210-411) predicted to form an outer membrane-embedded 12-stranded beta-barrel, followed by a linker domain also embedded in the outer membrane, and an extracellular passenger domain (residues 450-935) with a tightly-folded proteinase K (PK)-resistant, non-Big domain (residues 450-550), Big domains and a C-type lectin domain. Linker domain is important for the stability of the beta-barrel and spans the barrel pore in an extended conformation creating a large cavity on one side of the barrel pore. Beta-barrel forms a hydrophilic pore for the translocation of the passenger domain to the bacterial cell surface.</text>
</comment>
<comment type="miscellaneous">
    <text evidence="6">'Inverse' autotransporters have an N-terminal translocation domain followed by the passenger domain, as opposed to 'classical' autotransporters which have N-terminal passenger and C-terminal translocation domains.</text>
</comment>
<comment type="similarity">
    <text evidence="6">Belongs to the intimin/invasin family.</text>
</comment>
<dbReference type="EMBL" id="AF025311">
    <property type="protein sequence ID" value="AAC69247.1"/>
    <property type="molecule type" value="Genomic_DNA"/>
</dbReference>
<dbReference type="SMR" id="O31000"/>
<dbReference type="GO" id="GO:0009279">
    <property type="term" value="C:cell outer membrane"/>
    <property type="evidence" value="ECO:0007669"/>
    <property type="project" value="UniProtKB-SubCell"/>
</dbReference>
<dbReference type="GO" id="GO:0007155">
    <property type="term" value="P:cell adhesion"/>
    <property type="evidence" value="ECO:0007669"/>
    <property type="project" value="InterPro"/>
</dbReference>
<dbReference type="CDD" id="cd00118">
    <property type="entry name" value="LysM"/>
    <property type="match status" value="1"/>
</dbReference>
<dbReference type="FunFam" id="2.60.40.10:FF:000182">
    <property type="entry name" value="Gamma intimin"/>
    <property type="match status" value="1"/>
</dbReference>
<dbReference type="FunFam" id="2.60.40.1080:FF:000005">
    <property type="entry name" value="Intimin"/>
    <property type="match status" value="1"/>
</dbReference>
<dbReference type="FunFam" id="2.40.160.160:FF:000001">
    <property type="entry name" value="Intimin-like inverse autotransporter SinH"/>
    <property type="match status" value="1"/>
</dbReference>
<dbReference type="Gene3D" id="2.60.40.1080">
    <property type="match status" value="1"/>
</dbReference>
<dbReference type="Gene3D" id="2.60.40.10">
    <property type="entry name" value="Immunoglobulins"/>
    <property type="match status" value="2"/>
</dbReference>
<dbReference type="Gene3D" id="2.40.160.160">
    <property type="entry name" value="Inverse autotransporter, beta-domain"/>
    <property type="match status" value="1"/>
</dbReference>
<dbReference type="Gene3D" id="3.10.350.10">
    <property type="entry name" value="LysM domain"/>
    <property type="match status" value="1"/>
</dbReference>
<dbReference type="Gene3D" id="3.10.100.10">
    <property type="entry name" value="Mannose-Binding Protein A, subunit A"/>
    <property type="match status" value="1"/>
</dbReference>
<dbReference type="InterPro" id="IPR003344">
    <property type="entry name" value="Big_1_dom"/>
</dbReference>
<dbReference type="InterPro" id="IPR003343">
    <property type="entry name" value="Big_2"/>
</dbReference>
<dbReference type="InterPro" id="IPR016186">
    <property type="entry name" value="C-type_lectin-like/link_sf"/>
</dbReference>
<dbReference type="InterPro" id="IPR016187">
    <property type="entry name" value="CTDL_fold"/>
</dbReference>
<dbReference type="InterPro" id="IPR024519">
    <property type="entry name" value="IAT_beta"/>
</dbReference>
<dbReference type="InterPro" id="IPR038177">
    <property type="entry name" value="IAT_beta_sf"/>
</dbReference>
<dbReference type="InterPro" id="IPR013783">
    <property type="entry name" value="Ig-like_fold"/>
</dbReference>
<dbReference type="InterPro" id="IPR051715">
    <property type="entry name" value="Intimin-Invasin_domain"/>
</dbReference>
<dbReference type="InterPro" id="IPR003535">
    <property type="entry name" value="Intimin/invasin_bac"/>
</dbReference>
<dbReference type="InterPro" id="IPR013117">
    <property type="entry name" value="Intimin_C"/>
</dbReference>
<dbReference type="InterPro" id="IPR008964">
    <property type="entry name" value="Invasin/intimin_cell_adhesion"/>
</dbReference>
<dbReference type="InterPro" id="IPR018392">
    <property type="entry name" value="LysM_dom"/>
</dbReference>
<dbReference type="InterPro" id="IPR036779">
    <property type="entry name" value="LysM_dom_sf"/>
</dbReference>
<dbReference type="NCBIfam" id="NF033627">
    <property type="entry name" value="intimin_all"/>
    <property type="match status" value="1"/>
</dbReference>
<dbReference type="PANTHER" id="PTHR39576:SF2">
    <property type="entry name" value="ATTACHING AND EFFACING PROTEIN HOMOLOG-RELATED"/>
    <property type="match status" value="1"/>
</dbReference>
<dbReference type="PANTHER" id="PTHR39576">
    <property type="entry name" value="ATTACHING AND EFFACING PROTEIN HOMOLOG-RELATED-RELATED"/>
    <property type="match status" value="1"/>
</dbReference>
<dbReference type="Pfam" id="PF02369">
    <property type="entry name" value="Big_1"/>
    <property type="match status" value="2"/>
</dbReference>
<dbReference type="Pfam" id="PF02368">
    <property type="entry name" value="Big_2"/>
    <property type="match status" value="1"/>
</dbReference>
<dbReference type="Pfam" id="PF11924">
    <property type="entry name" value="IAT_beta"/>
    <property type="match status" value="1"/>
</dbReference>
<dbReference type="Pfam" id="PF07979">
    <property type="entry name" value="Intimin_C"/>
    <property type="match status" value="1"/>
</dbReference>
<dbReference type="Pfam" id="PF01476">
    <property type="entry name" value="LysM"/>
    <property type="match status" value="1"/>
</dbReference>
<dbReference type="PRINTS" id="PR01369">
    <property type="entry name" value="INTIMIN"/>
</dbReference>
<dbReference type="SMART" id="SM00634">
    <property type="entry name" value="BID_1"/>
    <property type="match status" value="2"/>
</dbReference>
<dbReference type="SMART" id="SM00635">
    <property type="entry name" value="BID_2"/>
    <property type="match status" value="1"/>
</dbReference>
<dbReference type="SMART" id="SM00257">
    <property type="entry name" value="LysM"/>
    <property type="match status" value="1"/>
</dbReference>
<dbReference type="SUPFAM" id="SSF56436">
    <property type="entry name" value="C-type lectin-like"/>
    <property type="match status" value="1"/>
</dbReference>
<dbReference type="SUPFAM" id="SSF49373">
    <property type="entry name" value="Invasin/intimin cell-adhesion fragments"/>
    <property type="match status" value="3"/>
</dbReference>
<dbReference type="PROSITE" id="PS51127">
    <property type="entry name" value="BIG1"/>
    <property type="match status" value="2"/>
</dbReference>
<dbReference type="PROSITE" id="PS51782">
    <property type="entry name" value="LYSM"/>
    <property type="match status" value="1"/>
</dbReference>
<name>EAE_ECO11</name>
<accession>O31000</accession>
<organism>
    <name type="scientific">Escherichia coli O111:H-</name>
    <dbReference type="NCBI Taxonomy" id="168927"/>
    <lineage>
        <taxon>Bacteria</taxon>
        <taxon>Pseudomonadati</taxon>
        <taxon>Pseudomonadota</taxon>
        <taxon>Gammaproteobacteria</taxon>
        <taxon>Enterobacterales</taxon>
        <taxon>Enterobacteriaceae</taxon>
        <taxon>Escherichia</taxon>
    </lineage>
</organism>